<protein>
    <recommendedName>
        <fullName evidence="1">Proline--tRNA ligase</fullName>
        <ecNumber evidence="1">6.1.1.15</ecNumber>
    </recommendedName>
    <alternativeName>
        <fullName evidence="1">Prolyl-tRNA synthetase</fullName>
        <shortName evidence="1">ProRS</shortName>
    </alternativeName>
</protein>
<comment type="function">
    <text evidence="1">Catalyzes the attachment of proline to tRNA(Pro) in a two-step reaction: proline is first activated by ATP to form Pro-AMP and then transferred to the acceptor end of tRNA(Pro).</text>
</comment>
<comment type="catalytic activity">
    <reaction evidence="1">
        <text>tRNA(Pro) + L-proline + ATP = L-prolyl-tRNA(Pro) + AMP + diphosphate</text>
        <dbReference type="Rhea" id="RHEA:14305"/>
        <dbReference type="Rhea" id="RHEA-COMP:9700"/>
        <dbReference type="Rhea" id="RHEA-COMP:9702"/>
        <dbReference type="ChEBI" id="CHEBI:30616"/>
        <dbReference type="ChEBI" id="CHEBI:33019"/>
        <dbReference type="ChEBI" id="CHEBI:60039"/>
        <dbReference type="ChEBI" id="CHEBI:78442"/>
        <dbReference type="ChEBI" id="CHEBI:78532"/>
        <dbReference type="ChEBI" id="CHEBI:456215"/>
        <dbReference type="EC" id="6.1.1.15"/>
    </reaction>
</comment>
<comment type="subunit">
    <text evidence="1">Homodimer.</text>
</comment>
<comment type="subcellular location">
    <subcellularLocation>
        <location evidence="1">Cytoplasm</location>
    </subcellularLocation>
</comment>
<comment type="domain">
    <text evidence="1">Consists of three domains: the N-terminal catalytic domain, the anticodon-binding domain and the C-terminal extension.</text>
</comment>
<comment type="similarity">
    <text evidence="1">Belongs to the class-II aminoacyl-tRNA synthetase family. ProS type 3 subfamily.</text>
</comment>
<proteinExistence type="inferred from homology"/>
<accession>C3NGV6</accession>
<reference key="1">
    <citation type="journal article" date="2009" name="Proc. Natl. Acad. Sci. U.S.A.">
        <title>Biogeography of the Sulfolobus islandicus pan-genome.</title>
        <authorList>
            <person name="Reno M.L."/>
            <person name="Held N.L."/>
            <person name="Fields C.J."/>
            <person name="Burke P.V."/>
            <person name="Whitaker R.J."/>
        </authorList>
    </citation>
    <scope>NUCLEOTIDE SEQUENCE [LARGE SCALE GENOMIC DNA]</scope>
    <source>
        <strain>Y.N.15.51 / Yellowstone #2</strain>
    </source>
</reference>
<dbReference type="EC" id="6.1.1.15" evidence="1"/>
<dbReference type="EMBL" id="CP001404">
    <property type="protein sequence ID" value="ACP48366.1"/>
    <property type="molecule type" value="Genomic_DNA"/>
</dbReference>
<dbReference type="RefSeq" id="WP_012713818.1">
    <property type="nucleotide sequence ID" value="NC_012623.1"/>
</dbReference>
<dbReference type="SMR" id="C3NGV6"/>
<dbReference type="GeneID" id="7810930"/>
<dbReference type="KEGG" id="sin:YN1551_1271"/>
<dbReference type="HOGENOM" id="CLU_001882_4_2_2"/>
<dbReference type="Proteomes" id="UP000006818">
    <property type="component" value="Chromosome"/>
</dbReference>
<dbReference type="GO" id="GO:0017101">
    <property type="term" value="C:aminoacyl-tRNA synthetase multienzyme complex"/>
    <property type="evidence" value="ECO:0007669"/>
    <property type="project" value="TreeGrafter"/>
</dbReference>
<dbReference type="GO" id="GO:0005737">
    <property type="term" value="C:cytoplasm"/>
    <property type="evidence" value="ECO:0007669"/>
    <property type="project" value="UniProtKB-SubCell"/>
</dbReference>
<dbReference type="GO" id="GO:0005524">
    <property type="term" value="F:ATP binding"/>
    <property type="evidence" value="ECO:0007669"/>
    <property type="project" value="UniProtKB-UniRule"/>
</dbReference>
<dbReference type="GO" id="GO:0004827">
    <property type="term" value="F:proline-tRNA ligase activity"/>
    <property type="evidence" value="ECO:0007669"/>
    <property type="project" value="UniProtKB-UniRule"/>
</dbReference>
<dbReference type="GO" id="GO:0006433">
    <property type="term" value="P:prolyl-tRNA aminoacylation"/>
    <property type="evidence" value="ECO:0007669"/>
    <property type="project" value="UniProtKB-UniRule"/>
</dbReference>
<dbReference type="CDD" id="cd00862">
    <property type="entry name" value="ProRS_anticodon_zinc"/>
    <property type="match status" value="1"/>
</dbReference>
<dbReference type="CDD" id="cd00778">
    <property type="entry name" value="ProRS_core_arch_euk"/>
    <property type="match status" value="1"/>
</dbReference>
<dbReference type="FunFam" id="3.40.50.800:FF:000005">
    <property type="entry name" value="bifunctional glutamate/proline--tRNA ligase"/>
    <property type="match status" value="1"/>
</dbReference>
<dbReference type="FunFam" id="3.30.930.10:FF:000037">
    <property type="entry name" value="Proline--tRNA ligase"/>
    <property type="match status" value="1"/>
</dbReference>
<dbReference type="Gene3D" id="3.40.50.800">
    <property type="entry name" value="Anticodon-binding domain"/>
    <property type="match status" value="1"/>
</dbReference>
<dbReference type="Gene3D" id="3.30.930.10">
    <property type="entry name" value="Bira Bifunctional Protein, Domain 2"/>
    <property type="match status" value="1"/>
</dbReference>
<dbReference type="Gene3D" id="3.30.110.30">
    <property type="entry name" value="C-terminal domain of ProRS"/>
    <property type="match status" value="1"/>
</dbReference>
<dbReference type="HAMAP" id="MF_01571">
    <property type="entry name" value="Pro_tRNA_synth_type3"/>
    <property type="match status" value="1"/>
</dbReference>
<dbReference type="InterPro" id="IPR002314">
    <property type="entry name" value="aa-tRNA-synt_IIb"/>
</dbReference>
<dbReference type="InterPro" id="IPR006195">
    <property type="entry name" value="aa-tRNA-synth_II"/>
</dbReference>
<dbReference type="InterPro" id="IPR045864">
    <property type="entry name" value="aa-tRNA-synth_II/BPL/LPL"/>
</dbReference>
<dbReference type="InterPro" id="IPR004154">
    <property type="entry name" value="Anticodon-bd"/>
</dbReference>
<dbReference type="InterPro" id="IPR036621">
    <property type="entry name" value="Anticodon-bd_dom_sf"/>
</dbReference>
<dbReference type="InterPro" id="IPR002316">
    <property type="entry name" value="Pro-tRNA-ligase_IIa"/>
</dbReference>
<dbReference type="InterPro" id="IPR004499">
    <property type="entry name" value="Pro-tRNA-ligase_IIa_arc-type"/>
</dbReference>
<dbReference type="InterPro" id="IPR016061">
    <property type="entry name" value="Pro-tRNA_ligase_II_C"/>
</dbReference>
<dbReference type="InterPro" id="IPR017449">
    <property type="entry name" value="Pro-tRNA_synth_II"/>
</dbReference>
<dbReference type="InterPro" id="IPR033721">
    <property type="entry name" value="ProRS_core_arch_euk"/>
</dbReference>
<dbReference type="NCBIfam" id="TIGR00408">
    <property type="entry name" value="proS_fam_I"/>
    <property type="match status" value="1"/>
</dbReference>
<dbReference type="PANTHER" id="PTHR43382:SF2">
    <property type="entry name" value="BIFUNCTIONAL GLUTAMATE_PROLINE--TRNA LIGASE"/>
    <property type="match status" value="1"/>
</dbReference>
<dbReference type="PANTHER" id="PTHR43382">
    <property type="entry name" value="PROLYL-TRNA SYNTHETASE"/>
    <property type="match status" value="1"/>
</dbReference>
<dbReference type="Pfam" id="PF03129">
    <property type="entry name" value="HGTP_anticodon"/>
    <property type="match status" value="1"/>
</dbReference>
<dbReference type="Pfam" id="PF09180">
    <property type="entry name" value="ProRS-C_1"/>
    <property type="match status" value="1"/>
</dbReference>
<dbReference type="Pfam" id="PF00587">
    <property type="entry name" value="tRNA-synt_2b"/>
    <property type="match status" value="1"/>
</dbReference>
<dbReference type="PRINTS" id="PR01046">
    <property type="entry name" value="TRNASYNTHPRO"/>
</dbReference>
<dbReference type="SMART" id="SM00946">
    <property type="entry name" value="ProRS-C_1"/>
    <property type="match status" value="1"/>
</dbReference>
<dbReference type="SUPFAM" id="SSF64586">
    <property type="entry name" value="C-terminal domain of ProRS"/>
    <property type="match status" value="1"/>
</dbReference>
<dbReference type="SUPFAM" id="SSF52954">
    <property type="entry name" value="Class II aaRS ABD-related"/>
    <property type="match status" value="1"/>
</dbReference>
<dbReference type="SUPFAM" id="SSF55681">
    <property type="entry name" value="Class II aaRS and biotin synthetases"/>
    <property type="match status" value="1"/>
</dbReference>
<dbReference type="PROSITE" id="PS50862">
    <property type="entry name" value="AA_TRNA_LIGASE_II"/>
    <property type="match status" value="1"/>
</dbReference>
<keyword id="KW-0030">Aminoacyl-tRNA synthetase</keyword>
<keyword id="KW-0067">ATP-binding</keyword>
<keyword id="KW-0963">Cytoplasm</keyword>
<keyword id="KW-0436">Ligase</keyword>
<keyword id="KW-0547">Nucleotide-binding</keyword>
<keyword id="KW-0648">Protein biosynthesis</keyword>
<sequence>MQITRDKWSKNFSEWFDWVLREGEFYDYGRYPVKGMGVWMPYGFKLRQNIISIIRNLLDSTGHEEVLFPLLIPEDLLRRESTHIKGFEEEVFWVTKGGSEDLDVKLALRPTSEVAITTMENLWLKSYKQLPKKYYQIVSVFRYETKATRPMIRLREITTFKEAHTVHETYDDAQRQVEEAIEIYKKIFNNLAIPYVLSERPEWDRFAGALHTYAFDTIMPDGKVMQIGTVHHLGQNFSRALDFKIQKKDGSLDYPHQTSYGISDRAIASVIAIHGDDHGPILPPSVAPIKVVVVPIPAKNEEGTQQVMKYSIEICEMLNKNNITCVTDQDTEKTPGEKFYIWEIKGVPIRLEIGPRELASSTVFIKRRDNLKSYTVKKEEVVNKVKEVLNEIQEDLRKRAWESLKSRIEYANDIEKAKNILENNSGIVDVPWCGSKECGLKIEELTNARVLGYPIEDRKVNDKCVICKMNAKTVLRVAKTY</sequence>
<gene>
    <name evidence="1" type="primary">proS</name>
    <name type="ordered locus">YN1551_1271</name>
</gene>
<feature type="chain" id="PRO_1000215579" description="Proline--tRNA ligase">
    <location>
        <begin position="1"/>
        <end position="481"/>
    </location>
</feature>
<organism>
    <name type="scientific">Saccharolobus islandicus (strain Y.N.15.51 / Yellowstone #2)</name>
    <name type="common">Sulfolobus islandicus</name>
    <dbReference type="NCBI Taxonomy" id="419942"/>
    <lineage>
        <taxon>Archaea</taxon>
        <taxon>Thermoproteota</taxon>
        <taxon>Thermoprotei</taxon>
        <taxon>Sulfolobales</taxon>
        <taxon>Sulfolobaceae</taxon>
        <taxon>Saccharolobus</taxon>
    </lineage>
</organism>
<evidence type="ECO:0000255" key="1">
    <source>
        <dbReference type="HAMAP-Rule" id="MF_01571"/>
    </source>
</evidence>
<name>SYP_SACI1</name>